<protein>
    <recommendedName>
        <fullName evidence="1">Chaperone protein DnaJ</fullName>
    </recommendedName>
</protein>
<dbReference type="EMBL" id="M97914">
    <property type="protein sequence ID" value="AAA22925.1"/>
    <property type="molecule type" value="Genomic_DNA"/>
</dbReference>
<dbReference type="EMBL" id="M96847">
    <property type="protein sequence ID" value="AAA22948.1"/>
    <property type="molecule type" value="Genomic_DNA"/>
</dbReference>
<dbReference type="EMBL" id="AE000783">
    <property type="protein sequence ID" value="AAC66888.1"/>
    <property type="molecule type" value="Genomic_DNA"/>
</dbReference>
<dbReference type="PIR" id="D70164">
    <property type="entry name" value="D70164"/>
</dbReference>
<dbReference type="RefSeq" id="NP_212651.1">
    <property type="nucleotide sequence ID" value="NC_001318.1"/>
</dbReference>
<dbReference type="RefSeq" id="WP_002656231.1">
    <property type="nucleotide sequence ID" value="NC_001318.1"/>
</dbReference>
<dbReference type="SMR" id="P28616"/>
<dbReference type="STRING" id="224326.BB_0517"/>
<dbReference type="PaxDb" id="224326-BB_0517"/>
<dbReference type="EnsemblBacteria" id="AAC66888">
    <property type="protein sequence ID" value="AAC66888"/>
    <property type="gene ID" value="BB_0517"/>
</dbReference>
<dbReference type="GeneID" id="56567951"/>
<dbReference type="KEGG" id="bbu:BB_0517"/>
<dbReference type="PATRIC" id="fig|224326.49.peg.908"/>
<dbReference type="HOGENOM" id="CLU_017633_0_7_12"/>
<dbReference type="OrthoDB" id="9779889at2"/>
<dbReference type="Proteomes" id="UP000001807">
    <property type="component" value="Chromosome"/>
</dbReference>
<dbReference type="GO" id="GO:0005737">
    <property type="term" value="C:cytoplasm"/>
    <property type="evidence" value="ECO:0007669"/>
    <property type="project" value="UniProtKB-SubCell"/>
</dbReference>
<dbReference type="GO" id="GO:0005524">
    <property type="term" value="F:ATP binding"/>
    <property type="evidence" value="ECO:0007669"/>
    <property type="project" value="InterPro"/>
</dbReference>
<dbReference type="GO" id="GO:0031072">
    <property type="term" value="F:heat shock protein binding"/>
    <property type="evidence" value="ECO:0007669"/>
    <property type="project" value="InterPro"/>
</dbReference>
<dbReference type="GO" id="GO:0051082">
    <property type="term" value="F:unfolded protein binding"/>
    <property type="evidence" value="ECO:0007669"/>
    <property type="project" value="UniProtKB-UniRule"/>
</dbReference>
<dbReference type="GO" id="GO:0008270">
    <property type="term" value="F:zinc ion binding"/>
    <property type="evidence" value="ECO:0007669"/>
    <property type="project" value="UniProtKB-UniRule"/>
</dbReference>
<dbReference type="GO" id="GO:0051085">
    <property type="term" value="P:chaperone cofactor-dependent protein refolding"/>
    <property type="evidence" value="ECO:0007669"/>
    <property type="project" value="TreeGrafter"/>
</dbReference>
<dbReference type="GO" id="GO:0006260">
    <property type="term" value="P:DNA replication"/>
    <property type="evidence" value="ECO:0007669"/>
    <property type="project" value="UniProtKB-KW"/>
</dbReference>
<dbReference type="GO" id="GO:0042026">
    <property type="term" value="P:protein refolding"/>
    <property type="evidence" value="ECO:0007669"/>
    <property type="project" value="TreeGrafter"/>
</dbReference>
<dbReference type="GO" id="GO:0009408">
    <property type="term" value="P:response to heat"/>
    <property type="evidence" value="ECO:0007669"/>
    <property type="project" value="InterPro"/>
</dbReference>
<dbReference type="CDD" id="cd06257">
    <property type="entry name" value="DnaJ"/>
    <property type="match status" value="1"/>
</dbReference>
<dbReference type="CDD" id="cd10747">
    <property type="entry name" value="DnaJ_C"/>
    <property type="match status" value="1"/>
</dbReference>
<dbReference type="CDD" id="cd10719">
    <property type="entry name" value="DnaJ_zf"/>
    <property type="match status" value="1"/>
</dbReference>
<dbReference type="FunFam" id="1.10.287.110:FF:000034">
    <property type="entry name" value="Chaperone protein DnaJ"/>
    <property type="match status" value="1"/>
</dbReference>
<dbReference type="FunFam" id="2.60.260.20:FF:000013">
    <property type="entry name" value="DnaJ subfamily B member 11"/>
    <property type="match status" value="1"/>
</dbReference>
<dbReference type="FunFam" id="2.10.230.10:FF:000002">
    <property type="entry name" value="Molecular chaperone DnaJ"/>
    <property type="match status" value="1"/>
</dbReference>
<dbReference type="Gene3D" id="1.10.287.110">
    <property type="entry name" value="DnaJ domain"/>
    <property type="match status" value="1"/>
</dbReference>
<dbReference type="Gene3D" id="2.10.230.10">
    <property type="entry name" value="Heat shock protein DnaJ, cysteine-rich domain"/>
    <property type="match status" value="1"/>
</dbReference>
<dbReference type="Gene3D" id="2.60.260.20">
    <property type="entry name" value="Urease metallochaperone UreE, N-terminal domain"/>
    <property type="match status" value="2"/>
</dbReference>
<dbReference type="HAMAP" id="MF_01152">
    <property type="entry name" value="DnaJ"/>
    <property type="match status" value="1"/>
</dbReference>
<dbReference type="InterPro" id="IPR012724">
    <property type="entry name" value="DnaJ"/>
</dbReference>
<dbReference type="InterPro" id="IPR002939">
    <property type="entry name" value="DnaJ_C"/>
</dbReference>
<dbReference type="InterPro" id="IPR001623">
    <property type="entry name" value="DnaJ_domain"/>
</dbReference>
<dbReference type="InterPro" id="IPR018253">
    <property type="entry name" value="DnaJ_domain_CS"/>
</dbReference>
<dbReference type="InterPro" id="IPR008971">
    <property type="entry name" value="HSP40/DnaJ_pept-bd"/>
</dbReference>
<dbReference type="InterPro" id="IPR001305">
    <property type="entry name" value="HSP_DnaJ_Cys-rich_dom"/>
</dbReference>
<dbReference type="InterPro" id="IPR036410">
    <property type="entry name" value="HSP_DnaJ_Cys-rich_dom_sf"/>
</dbReference>
<dbReference type="InterPro" id="IPR036869">
    <property type="entry name" value="J_dom_sf"/>
</dbReference>
<dbReference type="NCBIfam" id="TIGR02349">
    <property type="entry name" value="DnaJ_bact"/>
    <property type="match status" value="1"/>
</dbReference>
<dbReference type="NCBIfam" id="NF008035">
    <property type="entry name" value="PRK10767.1"/>
    <property type="match status" value="1"/>
</dbReference>
<dbReference type="NCBIfam" id="NF010878">
    <property type="entry name" value="PRK14285.1"/>
    <property type="match status" value="1"/>
</dbReference>
<dbReference type="PANTHER" id="PTHR43096:SF48">
    <property type="entry name" value="CHAPERONE PROTEIN DNAJ"/>
    <property type="match status" value="1"/>
</dbReference>
<dbReference type="PANTHER" id="PTHR43096">
    <property type="entry name" value="DNAJ HOMOLOG 1, MITOCHONDRIAL-RELATED"/>
    <property type="match status" value="1"/>
</dbReference>
<dbReference type="Pfam" id="PF00226">
    <property type="entry name" value="DnaJ"/>
    <property type="match status" value="1"/>
</dbReference>
<dbReference type="Pfam" id="PF01556">
    <property type="entry name" value="DnaJ_C"/>
    <property type="match status" value="1"/>
</dbReference>
<dbReference type="Pfam" id="PF00684">
    <property type="entry name" value="DnaJ_CXXCXGXG"/>
    <property type="match status" value="1"/>
</dbReference>
<dbReference type="PRINTS" id="PR00625">
    <property type="entry name" value="JDOMAIN"/>
</dbReference>
<dbReference type="SMART" id="SM00271">
    <property type="entry name" value="DnaJ"/>
    <property type="match status" value="1"/>
</dbReference>
<dbReference type="SUPFAM" id="SSF46565">
    <property type="entry name" value="Chaperone J-domain"/>
    <property type="match status" value="1"/>
</dbReference>
<dbReference type="SUPFAM" id="SSF57938">
    <property type="entry name" value="DnaJ/Hsp40 cysteine-rich domain"/>
    <property type="match status" value="1"/>
</dbReference>
<dbReference type="SUPFAM" id="SSF49493">
    <property type="entry name" value="HSP40/DnaJ peptide-binding domain"/>
    <property type="match status" value="2"/>
</dbReference>
<dbReference type="PROSITE" id="PS00636">
    <property type="entry name" value="DNAJ_1"/>
    <property type="match status" value="1"/>
</dbReference>
<dbReference type="PROSITE" id="PS50076">
    <property type="entry name" value="DNAJ_2"/>
    <property type="match status" value="1"/>
</dbReference>
<dbReference type="PROSITE" id="PS51188">
    <property type="entry name" value="ZF_CR"/>
    <property type="match status" value="1"/>
</dbReference>
<reference key="1">
    <citation type="journal article" date="1992" name="Infect. Immun.">
        <title>Characterization of a Borrelia burgdorferi dnaJ homolog.</title>
        <authorList>
            <person name="Anzola J."/>
            <person name="Luft B.J."/>
            <person name="Gorgone G."/>
            <person name="Peltz G."/>
        </authorList>
    </citation>
    <scope>NUCLEOTIDE SEQUENCE [GENOMIC DNA]</scope>
</reference>
<reference key="2">
    <citation type="journal article" date="1993" name="Mol. Microbiol.">
        <title>Isolation of dnaJ, dnaK, and grpE homologues from Borrelia burgdorferi and complementation of Escherichia coli mutants.</title>
        <authorList>
            <person name="Tilly K."/>
            <person name="Hauser R."/>
            <person name="Campbell J."/>
            <person name="Ostheimer G.J."/>
        </authorList>
    </citation>
    <scope>NUCLEOTIDE SEQUENCE [GENOMIC DNA]</scope>
</reference>
<reference key="3">
    <citation type="journal article" date="1997" name="Nature">
        <title>Genomic sequence of a Lyme disease spirochaete, Borrelia burgdorferi.</title>
        <authorList>
            <person name="Fraser C.M."/>
            <person name="Casjens S."/>
            <person name="Huang W.M."/>
            <person name="Sutton G.G."/>
            <person name="Clayton R.A."/>
            <person name="Lathigra R."/>
            <person name="White O."/>
            <person name="Ketchum K.A."/>
            <person name="Dodson R.J."/>
            <person name="Hickey E.K."/>
            <person name="Gwinn M.L."/>
            <person name="Dougherty B.A."/>
            <person name="Tomb J.-F."/>
            <person name="Fleischmann R.D."/>
            <person name="Richardson D.L."/>
            <person name="Peterson J.D."/>
            <person name="Kerlavage A.R."/>
            <person name="Quackenbush J."/>
            <person name="Salzberg S.L."/>
            <person name="Hanson M."/>
            <person name="van Vugt R."/>
            <person name="Palmer N."/>
            <person name="Adams M.D."/>
            <person name="Gocayne J.D."/>
            <person name="Weidman J.F."/>
            <person name="Utterback T.R."/>
            <person name="Watthey L."/>
            <person name="McDonald L.A."/>
            <person name="Artiach P."/>
            <person name="Bowman C."/>
            <person name="Garland S.A."/>
            <person name="Fujii C."/>
            <person name="Cotton M.D."/>
            <person name="Horst K."/>
            <person name="Roberts K.M."/>
            <person name="Hatch B."/>
            <person name="Smith H.O."/>
            <person name="Venter J.C."/>
        </authorList>
    </citation>
    <scope>NUCLEOTIDE SEQUENCE [LARGE SCALE GENOMIC DNA]</scope>
    <source>
        <strain>ATCC 35210 / DSM 4680 / CIP 102532 / B31</strain>
    </source>
</reference>
<evidence type="ECO:0000255" key="1">
    <source>
        <dbReference type="HAMAP-Rule" id="MF_01152"/>
    </source>
</evidence>
<evidence type="ECO:0000305" key="2"/>
<sequence>MKKDYYEILGLSKGASKDEIKKAYRKIAIKYHPDRNQGNEEAASIFKEATQAYEILIDDNKKAKYDRFGHSAFEGGGFEGFSGGFSGFSDIFEDFGDIFDSFFTGNKGQERNRKHAKGEDLGYNIEISLENAYFGYKNNINITRQMLCDSCLGKKSEKGTSPSICNMCNGSGRVVQGGGFFRVTTTCSKCYGEGKIISNPCKSCKGKGSLTKQETIQLNIPPGIDNNQQIKMKGKGNVNPDNQEYGDLYVKILIRSHKVFKRNGKDLYAMLPISFTQAALGKEVKIKTIASKEIKIHIPKGINNEEQILIKNAGMPILQTEKFGNLILITKIKTPKNLNSNAIKLFENLGKELKDGDEIDLLKA</sequence>
<gene>
    <name evidence="1" type="primary">dnaJ</name>
    <name type="ordered locus">BB_0517</name>
</gene>
<name>DNAJ_BORBU</name>
<proteinExistence type="evidence at transcript level"/>
<comment type="function">
    <text evidence="1">Participates actively in the response to hyperosmotic and heat shock by preventing the aggregation of stress-denatured proteins and by disaggregating proteins, also in an autonomous, DnaK-independent fashion. Unfolded proteins bind initially to DnaJ; upon interaction with the DnaJ-bound protein, DnaK hydrolyzes its bound ATP, resulting in the formation of a stable complex. GrpE releases ADP from DnaK; ATP binding to DnaK triggers the release of the substrate protein, thus completing the reaction cycle. Several rounds of ATP-dependent interactions between DnaJ, DnaK and GrpE are required for fully efficient folding. Also involved, together with DnaK and GrpE, in the DNA replication of plasmids through activation of initiation proteins.</text>
</comment>
<comment type="cofactor">
    <cofactor evidence="1">
        <name>Zn(2+)</name>
        <dbReference type="ChEBI" id="CHEBI:29105"/>
    </cofactor>
    <text evidence="1">Binds 2 Zn(2+) ions per monomer.</text>
</comment>
<comment type="subunit">
    <text evidence="1">Homodimer.</text>
</comment>
<comment type="subcellular location">
    <subcellularLocation>
        <location evidence="1">Cytoplasm</location>
    </subcellularLocation>
</comment>
<comment type="induction">
    <text>By heat shock.</text>
</comment>
<comment type="domain">
    <text evidence="1">The J domain is necessary and sufficient to stimulate DnaK ATPase activity. Zinc center 1 plays an important role in the autonomous, DnaK-independent chaperone activity of DnaJ. Zinc center 2 is essential for interaction with DnaK and for DnaJ activity.</text>
</comment>
<comment type="similarity">
    <text evidence="1">Belongs to the DnaJ family.</text>
</comment>
<feature type="chain" id="PRO_0000070735" description="Chaperone protein DnaJ">
    <location>
        <begin position="1"/>
        <end position="364"/>
    </location>
</feature>
<feature type="domain" description="J" evidence="1">
    <location>
        <begin position="4"/>
        <end position="69"/>
    </location>
</feature>
<feature type="repeat" description="CXXCXGXG motif">
    <location>
        <begin position="148"/>
        <end position="155"/>
    </location>
</feature>
<feature type="repeat" description="CXXCXGXG motif">
    <location>
        <begin position="165"/>
        <end position="172"/>
    </location>
</feature>
<feature type="repeat" description="CXXCXGXG motif">
    <location>
        <begin position="187"/>
        <end position="194"/>
    </location>
</feature>
<feature type="repeat" description="CXXCXGXG motif">
    <location>
        <begin position="201"/>
        <end position="208"/>
    </location>
</feature>
<feature type="zinc finger region" description="CR-type" evidence="1">
    <location>
        <begin position="135"/>
        <end position="213"/>
    </location>
</feature>
<feature type="binding site" evidence="1">
    <location>
        <position position="148"/>
    </location>
    <ligand>
        <name>Zn(2+)</name>
        <dbReference type="ChEBI" id="CHEBI:29105"/>
        <label>1</label>
    </ligand>
</feature>
<feature type="binding site" evidence="1">
    <location>
        <position position="151"/>
    </location>
    <ligand>
        <name>Zn(2+)</name>
        <dbReference type="ChEBI" id="CHEBI:29105"/>
        <label>1</label>
    </ligand>
</feature>
<feature type="binding site" evidence="1">
    <location>
        <position position="165"/>
    </location>
    <ligand>
        <name>Zn(2+)</name>
        <dbReference type="ChEBI" id="CHEBI:29105"/>
        <label>2</label>
    </ligand>
</feature>
<feature type="binding site" evidence="1">
    <location>
        <position position="168"/>
    </location>
    <ligand>
        <name>Zn(2+)</name>
        <dbReference type="ChEBI" id="CHEBI:29105"/>
        <label>2</label>
    </ligand>
</feature>
<feature type="binding site" evidence="1">
    <location>
        <position position="187"/>
    </location>
    <ligand>
        <name>Zn(2+)</name>
        <dbReference type="ChEBI" id="CHEBI:29105"/>
        <label>2</label>
    </ligand>
</feature>
<feature type="binding site" evidence="1">
    <location>
        <position position="190"/>
    </location>
    <ligand>
        <name>Zn(2+)</name>
        <dbReference type="ChEBI" id="CHEBI:29105"/>
        <label>2</label>
    </ligand>
</feature>
<feature type="binding site" evidence="1">
    <location>
        <position position="201"/>
    </location>
    <ligand>
        <name>Zn(2+)</name>
        <dbReference type="ChEBI" id="CHEBI:29105"/>
        <label>1</label>
    </ligand>
</feature>
<feature type="binding site" evidence="1">
    <location>
        <position position="204"/>
    </location>
    <ligand>
        <name>Zn(2+)</name>
        <dbReference type="ChEBI" id="CHEBI:29105"/>
        <label>1</label>
    </ligand>
</feature>
<feature type="sequence conflict" description="In Ref. 1; AAA22925." evidence="2" ref="1">
    <original>T</original>
    <variation>A</variation>
    <location>
        <position position="143"/>
    </location>
</feature>
<feature type="sequence conflict" description="In Ref. 2." evidence="2" ref="2">
    <location>
        <begin position="296"/>
        <end position="352"/>
    </location>
</feature>
<feature type="sequence conflict" description="In Ref. 1." evidence="2" ref="1">
    <original>KLFENLGKE</original>
    <variation>NFLKTWAKN</variation>
    <location>
        <begin position="344"/>
        <end position="352"/>
    </location>
</feature>
<organism>
    <name type="scientific">Borreliella burgdorferi (strain ATCC 35210 / DSM 4680 / CIP 102532 / B31)</name>
    <name type="common">Borrelia burgdorferi</name>
    <dbReference type="NCBI Taxonomy" id="224326"/>
    <lineage>
        <taxon>Bacteria</taxon>
        <taxon>Pseudomonadati</taxon>
        <taxon>Spirochaetota</taxon>
        <taxon>Spirochaetia</taxon>
        <taxon>Spirochaetales</taxon>
        <taxon>Borreliaceae</taxon>
        <taxon>Borreliella</taxon>
    </lineage>
</organism>
<keyword id="KW-0143">Chaperone</keyword>
<keyword id="KW-0963">Cytoplasm</keyword>
<keyword id="KW-0235">DNA replication</keyword>
<keyword id="KW-0479">Metal-binding</keyword>
<keyword id="KW-1185">Reference proteome</keyword>
<keyword id="KW-0677">Repeat</keyword>
<keyword id="KW-0346">Stress response</keyword>
<keyword id="KW-0862">Zinc</keyword>
<keyword id="KW-0863">Zinc-finger</keyword>
<accession>P28616</accession>
<accession>O51469</accession>